<organism>
    <name type="scientific">Helicobacter pylori (strain ATCC 700392 / 26695)</name>
    <name type="common">Campylobacter pylori</name>
    <dbReference type="NCBI Taxonomy" id="85962"/>
    <lineage>
        <taxon>Bacteria</taxon>
        <taxon>Pseudomonadati</taxon>
        <taxon>Campylobacterota</taxon>
        <taxon>Epsilonproteobacteria</taxon>
        <taxon>Campylobacterales</taxon>
        <taxon>Helicobacteraceae</taxon>
        <taxon>Helicobacter</taxon>
    </lineage>
</organism>
<evidence type="ECO:0000255" key="1">
    <source>
        <dbReference type="HAMAP-Rule" id="MF_00300"/>
    </source>
</evidence>
<evidence type="ECO:0000269" key="2">
    <source>
    </source>
</evidence>
<evidence type="ECO:0000303" key="3">
    <source>
    </source>
</evidence>
<evidence type="ECO:0000312" key="4">
    <source>
        <dbReference type="EMBL" id="AAD07726.1"/>
    </source>
</evidence>
<evidence type="ECO:0007829" key="5">
    <source>
        <dbReference type="PDB" id="1UM0"/>
    </source>
</evidence>
<comment type="function">
    <text evidence="1">Catalyzes the anti-1,4-elimination of the C-3 phosphate and the C-6 proR hydrogen from 5-enolpyruvylshikimate-3-phosphate (EPSP) to yield chorismate, which is the branch point compound that serves as the starting substrate for the three terminal pathways of aromatic amino acid biosynthesis. This reaction introduces a second double bond into the aromatic ring system.</text>
</comment>
<comment type="catalytic activity">
    <reaction evidence="1">
        <text>5-O-(1-carboxyvinyl)-3-phosphoshikimate = chorismate + phosphate</text>
        <dbReference type="Rhea" id="RHEA:21020"/>
        <dbReference type="ChEBI" id="CHEBI:29748"/>
        <dbReference type="ChEBI" id="CHEBI:43474"/>
        <dbReference type="ChEBI" id="CHEBI:57701"/>
        <dbReference type="EC" id="4.2.3.5"/>
    </reaction>
</comment>
<comment type="cofactor">
    <cofactor evidence="1 2">
        <name>FMNH2</name>
        <dbReference type="ChEBI" id="CHEBI:57618"/>
    </cofactor>
    <text evidence="1 2">Reduced FMN (FMNH(2)).</text>
</comment>
<comment type="pathway">
    <text evidence="1">Metabolic intermediate biosynthesis; chorismate biosynthesis; chorismate from D-erythrose 4-phosphate and phosphoenolpyruvate: step 7/7.</text>
</comment>
<comment type="subunit">
    <text evidence="1 2">Homotetramer.</text>
</comment>
<comment type="similarity">
    <text evidence="1">Belongs to the chorismate synthase family.</text>
</comment>
<dbReference type="EC" id="4.2.3.5" evidence="1"/>
<dbReference type="EMBL" id="AE000511">
    <property type="protein sequence ID" value="AAD07726.1"/>
    <property type="molecule type" value="Genomic_DNA"/>
</dbReference>
<dbReference type="PIR" id="G64602">
    <property type="entry name" value="G64602"/>
</dbReference>
<dbReference type="RefSeq" id="NP_207457.1">
    <property type="nucleotide sequence ID" value="NC_000915.1"/>
</dbReference>
<dbReference type="RefSeq" id="WP_001094036.1">
    <property type="nucleotide sequence ID" value="NC_018939.1"/>
</dbReference>
<dbReference type="PDB" id="1UM0">
    <property type="method" value="X-ray"/>
    <property type="resolution" value="1.95 A"/>
    <property type="chains" value="A/B/C/D=1-365"/>
</dbReference>
<dbReference type="PDB" id="1UMF">
    <property type="method" value="X-ray"/>
    <property type="resolution" value="2.25 A"/>
    <property type="chains" value="A/B/C/D=1-365"/>
</dbReference>
<dbReference type="PDBsum" id="1UM0"/>
<dbReference type="PDBsum" id="1UMF"/>
<dbReference type="SMR" id="P56122"/>
<dbReference type="FunCoup" id="P56122">
    <property type="interactions" value="324"/>
</dbReference>
<dbReference type="IntAct" id="P56122">
    <property type="interactions" value="7"/>
</dbReference>
<dbReference type="MINT" id="P56122"/>
<dbReference type="STRING" id="85962.HP_0663"/>
<dbReference type="DrugBank" id="DB03247">
    <property type="generic name" value="Flavin mononucleotide"/>
</dbReference>
<dbReference type="PaxDb" id="85962-C694_03430"/>
<dbReference type="EnsemblBacteria" id="AAD07726">
    <property type="protein sequence ID" value="AAD07726"/>
    <property type="gene ID" value="HP_0663"/>
</dbReference>
<dbReference type="KEGG" id="heo:C694_03430"/>
<dbReference type="KEGG" id="hpy:HP_0663"/>
<dbReference type="PATRIC" id="fig|85962.47.peg.713"/>
<dbReference type="eggNOG" id="COG0082">
    <property type="taxonomic scope" value="Bacteria"/>
</dbReference>
<dbReference type="InParanoid" id="P56122"/>
<dbReference type="OrthoDB" id="9771806at2"/>
<dbReference type="PhylomeDB" id="P56122"/>
<dbReference type="BRENDA" id="4.2.3.5">
    <property type="organism ID" value="2604"/>
</dbReference>
<dbReference type="UniPathway" id="UPA00053">
    <property type="reaction ID" value="UER00090"/>
</dbReference>
<dbReference type="EvolutionaryTrace" id="P56122"/>
<dbReference type="Proteomes" id="UP000000429">
    <property type="component" value="Chromosome"/>
</dbReference>
<dbReference type="GO" id="GO:0005829">
    <property type="term" value="C:cytosol"/>
    <property type="evidence" value="ECO:0000318"/>
    <property type="project" value="GO_Central"/>
</dbReference>
<dbReference type="GO" id="GO:0004107">
    <property type="term" value="F:chorismate synthase activity"/>
    <property type="evidence" value="ECO:0000318"/>
    <property type="project" value="GO_Central"/>
</dbReference>
<dbReference type="GO" id="GO:0010181">
    <property type="term" value="F:FMN binding"/>
    <property type="evidence" value="ECO:0000314"/>
    <property type="project" value="UniProtKB"/>
</dbReference>
<dbReference type="GO" id="GO:0008652">
    <property type="term" value="P:amino acid biosynthetic process"/>
    <property type="evidence" value="ECO:0007669"/>
    <property type="project" value="UniProtKB-KW"/>
</dbReference>
<dbReference type="GO" id="GO:0009073">
    <property type="term" value="P:aromatic amino acid family biosynthetic process"/>
    <property type="evidence" value="ECO:0000318"/>
    <property type="project" value="GO_Central"/>
</dbReference>
<dbReference type="GO" id="GO:0009423">
    <property type="term" value="P:chorismate biosynthetic process"/>
    <property type="evidence" value="ECO:0000318"/>
    <property type="project" value="GO_Central"/>
</dbReference>
<dbReference type="CDD" id="cd07304">
    <property type="entry name" value="Chorismate_synthase"/>
    <property type="match status" value="1"/>
</dbReference>
<dbReference type="FunFam" id="3.60.150.10:FF:000011">
    <property type="entry name" value="Chorismate synthase"/>
    <property type="match status" value="1"/>
</dbReference>
<dbReference type="Gene3D" id="3.60.150.10">
    <property type="entry name" value="Chorismate synthase AroC"/>
    <property type="match status" value="1"/>
</dbReference>
<dbReference type="HAMAP" id="MF_00300">
    <property type="entry name" value="Chorismate_synth"/>
    <property type="match status" value="1"/>
</dbReference>
<dbReference type="InterPro" id="IPR000453">
    <property type="entry name" value="Chorismate_synth"/>
</dbReference>
<dbReference type="InterPro" id="IPR035904">
    <property type="entry name" value="Chorismate_synth_AroC_sf"/>
</dbReference>
<dbReference type="InterPro" id="IPR020541">
    <property type="entry name" value="Chorismate_synthase_CS"/>
</dbReference>
<dbReference type="NCBIfam" id="TIGR00033">
    <property type="entry name" value="aroC"/>
    <property type="match status" value="1"/>
</dbReference>
<dbReference type="NCBIfam" id="NF003793">
    <property type="entry name" value="PRK05382.1"/>
    <property type="match status" value="1"/>
</dbReference>
<dbReference type="PANTHER" id="PTHR21085">
    <property type="entry name" value="CHORISMATE SYNTHASE"/>
    <property type="match status" value="1"/>
</dbReference>
<dbReference type="PANTHER" id="PTHR21085:SF0">
    <property type="entry name" value="CHORISMATE SYNTHASE"/>
    <property type="match status" value="1"/>
</dbReference>
<dbReference type="Pfam" id="PF01264">
    <property type="entry name" value="Chorismate_synt"/>
    <property type="match status" value="1"/>
</dbReference>
<dbReference type="PIRSF" id="PIRSF001456">
    <property type="entry name" value="Chorismate_synth"/>
    <property type="match status" value="1"/>
</dbReference>
<dbReference type="SUPFAM" id="SSF103263">
    <property type="entry name" value="Chorismate synthase, AroC"/>
    <property type="match status" value="1"/>
</dbReference>
<dbReference type="PROSITE" id="PS00787">
    <property type="entry name" value="CHORISMATE_SYNTHASE_1"/>
    <property type="match status" value="1"/>
</dbReference>
<dbReference type="PROSITE" id="PS00788">
    <property type="entry name" value="CHORISMATE_SYNTHASE_2"/>
    <property type="match status" value="1"/>
</dbReference>
<dbReference type="PROSITE" id="PS00789">
    <property type="entry name" value="CHORISMATE_SYNTHASE_3"/>
    <property type="match status" value="1"/>
</dbReference>
<reference key="1">
    <citation type="journal article" date="1997" name="Nature">
        <title>The complete genome sequence of the gastric pathogen Helicobacter pylori.</title>
        <authorList>
            <person name="Tomb J.-F."/>
            <person name="White O."/>
            <person name="Kerlavage A.R."/>
            <person name="Clayton R.A."/>
            <person name="Sutton G.G."/>
            <person name="Fleischmann R.D."/>
            <person name="Ketchum K.A."/>
            <person name="Klenk H.-P."/>
            <person name="Gill S.R."/>
            <person name="Dougherty B.A."/>
            <person name="Nelson K.E."/>
            <person name="Quackenbush J."/>
            <person name="Zhou L."/>
            <person name="Kirkness E.F."/>
            <person name="Peterson S.N."/>
            <person name="Loftus B.J."/>
            <person name="Richardson D.L."/>
            <person name="Dodson R.J."/>
            <person name="Khalak H.G."/>
            <person name="Glodek A."/>
            <person name="McKenney K."/>
            <person name="FitzGerald L.M."/>
            <person name="Lee N."/>
            <person name="Adams M.D."/>
            <person name="Hickey E.K."/>
            <person name="Berg D.E."/>
            <person name="Gocayne J.D."/>
            <person name="Utterback T.R."/>
            <person name="Peterson J.D."/>
            <person name="Kelley J.M."/>
            <person name="Cotton M.D."/>
            <person name="Weidman J.F."/>
            <person name="Fujii C."/>
            <person name="Bowman C."/>
            <person name="Watthey L."/>
            <person name="Wallin E."/>
            <person name="Hayes W.S."/>
            <person name="Borodovsky M."/>
            <person name="Karp P.D."/>
            <person name="Smith H.O."/>
            <person name="Fraser C.M."/>
            <person name="Venter J.C."/>
        </authorList>
    </citation>
    <scope>NUCLEOTIDE SEQUENCE [LARGE SCALE GENOMIC DNA]</scope>
    <source>
        <strain>ATCC 700392 / 26695</strain>
    </source>
</reference>
<reference key="2">
    <citation type="journal article" date="2004" name="J. Mol. Biol.">
        <title>Crystal structure of chorismate synthase: a novel FMN-binding protein fold and functional insights.</title>
        <authorList>
            <person name="Ahn H.J."/>
            <person name="Yoon H.J."/>
            <person name="Lee B."/>
            <person name="Suh S.W."/>
        </authorList>
    </citation>
    <scope>X-RAY CRYSTALLOGRAPHY (1.95 ANGSTROMS) IN COMPLEX WITH FMN</scope>
    <scope>COFACTOR</scope>
    <scope>SUBUNIT</scope>
</reference>
<gene>
    <name evidence="1" type="primary">aroC</name>
    <name evidence="4" type="ordered locus">HP_0663</name>
</gene>
<accession>P56122</accession>
<feature type="chain" id="PRO_0000140596" description="Chorismate synthase">
    <location>
        <begin position="1"/>
        <end position="365"/>
    </location>
</feature>
<feature type="binding site" evidence="1">
    <location>
        <position position="46"/>
    </location>
    <ligand>
        <name>NADP(+)</name>
        <dbReference type="ChEBI" id="CHEBI:58349"/>
    </ligand>
</feature>
<feature type="binding site" evidence="1 2">
    <location>
        <begin position="123"/>
        <end position="125"/>
    </location>
    <ligand>
        <name>FMN</name>
        <dbReference type="ChEBI" id="CHEBI:58210"/>
    </ligand>
</feature>
<feature type="binding site" evidence="1">
    <location>
        <begin position="241"/>
        <end position="242"/>
    </location>
    <ligand>
        <name>FMN</name>
        <dbReference type="ChEBI" id="CHEBI:58210"/>
    </ligand>
</feature>
<feature type="binding site" evidence="1">
    <location>
        <position position="281"/>
    </location>
    <ligand>
        <name>FMN</name>
        <dbReference type="ChEBI" id="CHEBI:58210"/>
    </ligand>
</feature>
<feature type="binding site" evidence="1 2">
    <location>
        <begin position="296"/>
        <end position="300"/>
    </location>
    <ligand>
        <name>FMN</name>
        <dbReference type="ChEBI" id="CHEBI:58210"/>
    </ligand>
</feature>
<feature type="binding site" evidence="1">
    <location>
        <position position="322"/>
    </location>
    <ligand>
        <name>FMN</name>
        <dbReference type="ChEBI" id="CHEBI:58210"/>
    </ligand>
</feature>
<feature type="strand" evidence="5">
    <location>
        <begin position="6"/>
        <end position="12"/>
    </location>
</feature>
<feature type="strand" evidence="5">
    <location>
        <begin position="18"/>
        <end position="26"/>
    </location>
</feature>
<feature type="helix" evidence="5">
    <location>
        <begin position="36"/>
        <end position="46"/>
    </location>
</feature>
<feature type="helix" evidence="5">
    <location>
        <begin position="56"/>
        <end position="59"/>
    </location>
</feature>
<feature type="strand" evidence="5">
    <location>
        <begin position="62"/>
        <end position="65"/>
    </location>
</feature>
<feature type="strand" evidence="5">
    <location>
        <begin position="67"/>
        <end position="70"/>
    </location>
</feature>
<feature type="strand" evidence="5">
    <location>
        <begin position="79"/>
        <end position="84"/>
    </location>
</feature>
<feature type="helix" evidence="5">
    <location>
        <begin position="106"/>
        <end position="113"/>
    </location>
</feature>
<feature type="helix" evidence="5">
    <location>
        <begin position="126"/>
        <end position="145"/>
    </location>
</feature>
<feature type="strand" evidence="5">
    <location>
        <begin position="148"/>
        <end position="157"/>
    </location>
</feature>
<feature type="helix" evidence="5">
    <location>
        <begin position="167"/>
        <end position="172"/>
    </location>
</feature>
<feature type="helix" evidence="5">
    <location>
        <begin position="180"/>
        <end position="195"/>
    </location>
</feature>
<feature type="strand" evidence="5">
    <location>
        <begin position="202"/>
        <end position="212"/>
    </location>
</feature>
<feature type="turn" evidence="5">
    <location>
        <begin position="224"/>
        <end position="226"/>
    </location>
</feature>
<feature type="helix" evidence="5">
    <location>
        <begin position="229"/>
        <end position="238"/>
    </location>
</feature>
<feature type="strand" evidence="5">
    <location>
        <begin position="243"/>
        <end position="248"/>
    </location>
</feature>
<feature type="helix" evidence="5">
    <location>
        <begin position="251"/>
        <end position="256"/>
    </location>
</feature>
<feature type="helix" evidence="5">
    <location>
        <begin position="259"/>
        <end position="262"/>
    </location>
</feature>
<feature type="strand" evidence="5">
    <location>
        <begin position="270"/>
        <end position="272"/>
    </location>
</feature>
<feature type="turn" evidence="5">
    <location>
        <begin position="275"/>
        <end position="278"/>
    </location>
</feature>
<feature type="strand" evidence="5">
    <location>
        <begin position="289"/>
        <end position="295"/>
    </location>
</feature>
<feature type="strand" evidence="5">
    <location>
        <begin position="305"/>
        <end position="309"/>
    </location>
</feature>
<feature type="strand" evidence="5">
    <location>
        <begin position="314"/>
        <end position="317"/>
    </location>
</feature>
<feature type="helix" evidence="5">
    <location>
        <begin position="328"/>
        <end position="349"/>
    </location>
</feature>
<feature type="helix" evidence="5">
    <location>
        <begin position="350"/>
        <end position="352"/>
    </location>
</feature>
<feature type="helix" evidence="5">
    <location>
        <begin position="355"/>
        <end position="362"/>
    </location>
</feature>
<sequence>MNTLGRFLRLTTFGESHGDVIGGVLDGMPSGIKIDYALLENEMKRRQGGRNVFITPRKEDDKVEITSGVFEDFSTGTPIGFLIHNQRARSKDYDNIKNLFRPSHADFTYFHKYGIRDFRGGGRSSARESAIRVAAGAFAKMLLREIGIVCESGIIEIGGIKAKNYDFNHALKSEIFALDEEQEEAQKTAIQNAIKNHDSIGGVALIRARSIKTNQKLPIGLGQGLYAKLDAKIAEAMMGLNGVKAVEIGKGVESSLLKGSEYNDLMDQKGFLSNRSGGVLGGMSNGEEIIVRVHFKPTPSIFQPQRTIDINGNECECLLKGRHDPCIAIRGSVVCESLLALVLADMVLLNLTSKIEYLKTIYNEN</sequence>
<name>AROC_HELPY</name>
<protein>
    <recommendedName>
        <fullName evidence="1 3">Chorismate synthase</fullName>
        <shortName evidence="1">CS</shortName>
        <ecNumber evidence="1">4.2.3.5</ecNumber>
    </recommendedName>
    <alternativeName>
        <fullName evidence="1">5-enolpyruvylshikimate-3-phosphate phospholyase</fullName>
    </alternativeName>
</protein>
<proteinExistence type="evidence at protein level"/>
<keyword id="KW-0002">3D-structure</keyword>
<keyword id="KW-0028">Amino-acid biosynthesis</keyword>
<keyword id="KW-0057">Aromatic amino acid biosynthesis</keyword>
<keyword id="KW-0274">FAD</keyword>
<keyword id="KW-0285">Flavoprotein</keyword>
<keyword id="KW-0288">FMN</keyword>
<keyword id="KW-0456">Lyase</keyword>
<keyword id="KW-0521">NADP</keyword>
<keyword id="KW-1185">Reference proteome</keyword>